<protein>
    <recommendedName>
        <fullName evidence="1 2">Type 3 secretion system secretin</fullName>
        <shortName evidence="1 2">T3SS secretin</shortName>
    </recommendedName>
    <alternativeName>
        <fullName evidence="3">Outer membrane protein MxiD</fullName>
    </alternativeName>
</protein>
<feature type="signal peptide" evidence="2">
    <location>
        <begin position="1"/>
        <end position="22"/>
    </location>
</feature>
<feature type="chain" id="PRO_0000013113" description="Type 3 secretion system secretin" evidence="2">
    <location>
        <begin position="23"/>
        <end position="566"/>
    </location>
</feature>
<accession>Q55293</accession>
<evidence type="ECO:0000250" key="1">
    <source>
        <dbReference type="UniProtKB" id="Q04641"/>
    </source>
</evidence>
<evidence type="ECO:0000255" key="2">
    <source>
        <dbReference type="HAMAP-Rule" id="MF_02219"/>
    </source>
</evidence>
<evidence type="ECO:0000305" key="3"/>
<proteinExistence type="inferred from homology"/>
<reference key="1">
    <citation type="submission" date="1995-05" db="EMBL/GenBank/DDBJ databases">
        <title>Comparison and high conservation of nucleotide sequences of spa-mxi regions between S.sonnei and S.flexneri -- identification of a new gene coding plausible membrane protein.</title>
        <authorList>
            <person name="Arakawa E."/>
            <person name="Kato J."/>
            <person name="Ito K."/>
            <person name="Watanabe H."/>
        </authorList>
    </citation>
    <scope>NUCLEOTIDE SEQUENCE [GENOMIC DNA]</scope>
    <source>
        <strain>HW383</strain>
    </source>
</reference>
<comment type="function">
    <text evidence="2">Component of the type III secretion system (T3SS), also called injectisome, which is used to inject bacterial effector proteins into eukaryotic host cells. Forms a ring-shaped multimeric structure with an apparent central pore in the outer membrane.</text>
</comment>
<comment type="subunit">
    <text evidence="2">The core secretion machinery of the T3SS is composed of approximately 20 different proteins, including cytoplasmic components, a base, an export apparatus and a needle. This subunit is part of the base, which anchors the injectisome in the bacterial cell envelope. Forms a stable homooligomeric complex.</text>
</comment>
<comment type="subcellular location">
    <subcellularLocation>
        <location evidence="2">Cell outer membrane</location>
    </subcellularLocation>
</comment>
<comment type="similarity">
    <text evidence="2 3">Belongs to the bacterial secretin family. T3SS SctC subfamily.</text>
</comment>
<dbReference type="EMBL" id="D50601">
    <property type="protein sequence ID" value="BAA09154.1"/>
    <property type="molecule type" value="Genomic_DNA"/>
</dbReference>
<dbReference type="RefSeq" id="WP_050899888.1">
    <property type="nucleotide sequence ID" value="NZ_CATNNN010000034.1"/>
</dbReference>
<dbReference type="BMRB" id="Q55293"/>
<dbReference type="SMR" id="Q55293"/>
<dbReference type="STRING" id="216599.GCA_000283715_05236"/>
<dbReference type="GO" id="GO:0009279">
    <property type="term" value="C:cell outer membrane"/>
    <property type="evidence" value="ECO:0007669"/>
    <property type="project" value="UniProtKB-SubCell"/>
</dbReference>
<dbReference type="GO" id="GO:0015627">
    <property type="term" value="C:type II protein secretion system complex"/>
    <property type="evidence" value="ECO:0007669"/>
    <property type="project" value="TreeGrafter"/>
</dbReference>
<dbReference type="GO" id="GO:0030257">
    <property type="term" value="C:type III protein secretion system complex"/>
    <property type="evidence" value="ECO:0007669"/>
    <property type="project" value="UniProtKB-UniRule"/>
</dbReference>
<dbReference type="GO" id="GO:0030254">
    <property type="term" value="P:protein secretion by the type III secretion system"/>
    <property type="evidence" value="ECO:0007669"/>
    <property type="project" value="UniProtKB-UniRule"/>
</dbReference>
<dbReference type="Gene3D" id="3.30.1370.120">
    <property type="match status" value="2"/>
</dbReference>
<dbReference type="Gene3D" id="3.55.50.30">
    <property type="match status" value="1"/>
</dbReference>
<dbReference type="HAMAP" id="MF_02219">
    <property type="entry name" value="Type_III_secretin"/>
    <property type="match status" value="1"/>
</dbReference>
<dbReference type="InterPro" id="IPR050810">
    <property type="entry name" value="Bact_Secretion_Sys_Channel"/>
</dbReference>
<dbReference type="InterPro" id="IPR005644">
    <property type="entry name" value="NolW-like"/>
</dbReference>
<dbReference type="InterPro" id="IPR038591">
    <property type="entry name" value="NolW-like_sf"/>
</dbReference>
<dbReference type="InterPro" id="IPR004846">
    <property type="entry name" value="T2SS/T3SS_dom"/>
</dbReference>
<dbReference type="InterPro" id="IPR004845">
    <property type="entry name" value="T2SS_GspD_CS"/>
</dbReference>
<dbReference type="InterPro" id="IPR049034">
    <property type="entry name" value="T3S_SPI-1_N0"/>
</dbReference>
<dbReference type="InterPro" id="IPR003522">
    <property type="entry name" value="T3SS_OM_pore_YscC"/>
</dbReference>
<dbReference type="NCBIfam" id="TIGR02516">
    <property type="entry name" value="type_III_yscC"/>
    <property type="match status" value="1"/>
</dbReference>
<dbReference type="PANTHER" id="PTHR30332">
    <property type="entry name" value="PROBABLE GENERAL SECRETION PATHWAY PROTEIN D"/>
    <property type="match status" value="1"/>
</dbReference>
<dbReference type="PANTHER" id="PTHR30332:SF5">
    <property type="entry name" value="SPI-1 TYPE 3 SECRETION SYSTEM SECRETIN"/>
    <property type="match status" value="1"/>
</dbReference>
<dbReference type="Pfam" id="PF00263">
    <property type="entry name" value="Secretin"/>
    <property type="match status" value="1"/>
</dbReference>
<dbReference type="Pfam" id="PF03958">
    <property type="entry name" value="Secretin_N"/>
    <property type="match status" value="2"/>
</dbReference>
<dbReference type="Pfam" id="PF21304">
    <property type="entry name" value="T3S_SPI-1_N0"/>
    <property type="match status" value="1"/>
</dbReference>
<dbReference type="PRINTS" id="PR01337">
    <property type="entry name" value="TYPE3OMGPROT"/>
</dbReference>
<dbReference type="PROSITE" id="PS00875">
    <property type="entry name" value="T2SP_D"/>
    <property type="match status" value="1"/>
</dbReference>
<keyword id="KW-0998">Cell outer membrane</keyword>
<keyword id="KW-0472">Membrane</keyword>
<keyword id="KW-0614">Plasmid</keyword>
<keyword id="KW-0653">Protein transport</keyword>
<keyword id="KW-0732">Signal</keyword>
<keyword id="KW-0811">Translocation</keyword>
<keyword id="KW-0813">Transport</keyword>
<keyword id="KW-0843">Virulence</keyword>
<geneLocation type="plasmid"/>
<organism>
    <name type="scientific">Shigella sonnei</name>
    <dbReference type="NCBI Taxonomy" id="624"/>
    <lineage>
        <taxon>Bacteria</taxon>
        <taxon>Pseudomonadati</taxon>
        <taxon>Pseudomonadota</taxon>
        <taxon>Gammaproteobacteria</taxon>
        <taxon>Enterobacterales</taxon>
        <taxon>Enterobacteriaceae</taxon>
        <taxon>Shigella</taxon>
    </lineage>
</organism>
<name>SCTC_SHISO</name>
<sequence>MKKFNIKSLTLLIVLLPLIVNANNIDSHLLEQNDIAKYVAQSDTVGSFFDRFSALLNYPIVVSKQAAKKRISGEFDLSNPEEMLEKLTLLVGLIWYKDGNALYIYDSGELISKVILLENISLNYLIQYLKDANLYDHRYPIRGNISDKTFYISGPPALVELVANTATLLDKQVSSIGTDKVNFGVIKLKNTFVSDRTYNMRGEDIVIPGVATVVERLLNNGKALSNRQAQNDPMPPFNITQKVSEDSNDFSFSSVTNSSILEDVSLIAYPETNSILVKGNDQQIQIIRDIITQLDVAKRHIELSLWIIDIDKSELNNLGVNWQGTASFGDSFGASFNMSSSASISTLDGNKFIASVMALNQKKKANVVSRPVILTQENIPAIFDNNRTFYVSLVGERNSSLEHVTYGTLINVIPRFSSRGQIEMSLTIEDGTGNSQSNYNYNNENTSVLPEVGRTKISTIARVPQGKSLLIGGYTHETNSNEIVSIPFLSSIPVIGNVFKYKTSNISNIVRVFLIQPREIKESSYYNTAEYKSLISEREIQKTTQIIPSETTLLEDEKSLVSYLNY</sequence>
<gene>
    <name evidence="1 2" type="primary">sctC</name>
    <name type="synonym">mxiD</name>
</gene>